<name>LYSC2_CAPHI</name>
<dbReference type="EC" id="3.2.1.17"/>
<dbReference type="SMR" id="P37714"/>
<dbReference type="STRING" id="9925.ENSCHIP00000007561"/>
<dbReference type="CAZy" id="GH22">
    <property type="family name" value="Glycoside Hydrolase Family 22"/>
</dbReference>
<dbReference type="Proteomes" id="UP000291000">
    <property type="component" value="Unassembled WGS sequence"/>
</dbReference>
<dbReference type="Proteomes" id="UP000694566">
    <property type="component" value="Unplaced"/>
</dbReference>
<dbReference type="GO" id="GO:0003796">
    <property type="term" value="F:lysozyme activity"/>
    <property type="evidence" value="ECO:0007669"/>
    <property type="project" value="UniProtKB-EC"/>
</dbReference>
<dbReference type="GO" id="GO:0050829">
    <property type="term" value="P:defense response to Gram-negative bacterium"/>
    <property type="evidence" value="ECO:0007669"/>
    <property type="project" value="TreeGrafter"/>
</dbReference>
<dbReference type="GO" id="GO:0050830">
    <property type="term" value="P:defense response to Gram-positive bacterium"/>
    <property type="evidence" value="ECO:0007669"/>
    <property type="project" value="TreeGrafter"/>
</dbReference>
<dbReference type="GO" id="GO:0007586">
    <property type="term" value="P:digestion"/>
    <property type="evidence" value="ECO:0007669"/>
    <property type="project" value="UniProtKB-KW"/>
</dbReference>
<dbReference type="GO" id="GO:0031640">
    <property type="term" value="P:killing of cells of another organism"/>
    <property type="evidence" value="ECO:0007669"/>
    <property type="project" value="UniProtKB-KW"/>
</dbReference>
<dbReference type="CDD" id="cd16897">
    <property type="entry name" value="LYZ_C"/>
    <property type="match status" value="1"/>
</dbReference>
<dbReference type="FunFam" id="1.10.530.10:FF:000001">
    <property type="entry name" value="Lysozyme C"/>
    <property type="match status" value="1"/>
</dbReference>
<dbReference type="Gene3D" id="1.10.530.10">
    <property type="match status" value="1"/>
</dbReference>
<dbReference type="InterPro" id="IPR001916">
    <property type="entry name" value="Glyco_hydro_22"/>
</dbReference>
<dbReference type="InterPro" id="IPR019799">
    <property type="entry name" value="Glyco_hydro_22_CS"/>
</dbReference>
<dbReference type="InterPro" id="IPR000974">
    <property type="entry name" value="Glyco_hydro_22_lys"/>
</dbReference>
<dbReference type="InterPro" id="IPR023346">
    <property type="entry name" value="Lysozyme-like_dom_sf"/>
</dbReference>
<dbReference type="PANTHER" id="PTHR11407">
    <property type="entry name" value="LYSOZYME C"/>
    <property type="match status" value="1"/>
</dbReference>
<dbReference type="PANTHER" id="PTHR11407:SF28">
    <property type="entry name" value="LYSOZYME C"/>
    <property type="match status" value="1"/>
</dbReference>
<dbReference type="Pfam" id="PF00062">
    <property type="entry name" value="Lys"/>
    <property type="match status" value="1"/>
</dbReference>
<dbReference type="PRINTS" id="PR00137">
    <property type="entry name" value="LYSOZYME"/>
</dbReference>
<dbReference type="PRINTS" id="PR00135">
    <property type="entry name" value="LYZLACT"/>
</dbReference>
<dbReference type="SMART" id="SM00263">
    <property type="entry name" value="LYZ1"/>
    <property type="match status" value="1"/>
</dbReference>
<dbReference type="SUPFAM" id="SSF53955">
    <property type="entry name" value="Lysozyme-like"/>
    <property type="match status" value="1"/>
</dbReference>
<dbReference type="PROSITE" id="PS00128">
    <property type="entry name" value="GLYCOSYL_HYDROL_F22_1"/>
    <property type="match status" value="1"/>
</dbReference>
<dbReference type="PROSITE" id="PS51348">
    <property type="entry name" value="GLYCOSYL_HYDROL_F22_2"/>
    <property type="match status" value="1"/>
</dbReference>
<feature type="chain" id="PRO_0000208848" description="Lysozyme C-2">
    <location>
        <begin position="1"/>
        <end position="129"/>
    </location>
</feature>
<feature type="domain" description="C-type lysozyme" evidence="2">
    <location>
        <begin position="1"/>
        <end position="129"/>
    </location>
</feature>
<feature type="active site" evidence="2">
    <location>
        <position position="35"/>
    </location>
</feature>
<feature type="active site" evidence="2">
    <location>
        <position position="53"/>
    </location>
</feature>
<feature type="disulfide bond" evidence="2">
    <location>
        <begin position="6"/>
        <end position="127"/>
    </location>
</feature>
<feature type="disulfide bond" evidence="2">
    <location>
        <begin position="30"/>
        <end position="115"/>
    </location>
</feature>
<feature type="disulfide bond" evidence="2">
    <location>
        <begin position="65"/>
        <end position="81"/>
    </location>
</feature>
<feature type="disulfide bond" evidence="2">
    <location>
        <begin position="77"/>
        <end position="95"/>
    </location>
</feature>
<organism>
    <name type="scientific">Capra hircus</name>
    <name type="common">Goat</name>
    <dbReference type="NCBI Taxonomy" id="9925"/>
    <lineage>
        <taxon>Eukaryota</taxon>
        <taxon>Metazoa</taxon>
        <taxon>Chordata</taxon>
        <taxon>Craniata</taxon>
        <taxon>Vertebrata</taxon>
        <taxon>Euteleostomi</taxon>
        <taxon>Mammalia</taxon>
        <taxon>Eutheria</taxon>
        <taxon>Laurasiatheria</taxon>
        <taxon>Artiodactyla</taxon>
        <taxon>Ruminantia</taxon>
        <taxon>Pecora</taxon>
        <taxon>Bovidae</taxon>
        <taxon>Caprinae</taxon>
        <taxon>Capra</taxon>
    </lineage>
</organism>
<protein>
    <recommendedName>
        <fullName>Lysozyme C-2</fullName>
        <ecNumber>3.2.1.17</ecNumber>
    </recommendedName>
    <alternativeName>
        <fullName>1,4-beta-N-acetylmuramidase C-2</fullName>
    </alternativeName>
</protein>
<reference key="1">
    <citation type="journal article" date="1990" name="J. Mol. Evol.">
        <title>Amino acid sequences of stomach and nonstomach lysozymes of ruminants.</title>
        <authorList>
            <person name="Jolles J."/>
            <person name="Prager E.M."/>
            <person name="Alnemri E.S."/>
            <person name="Jolles P."/>
            <person name="Ibrahimi I.M."/>
            <person name="Wilson A.C."/>
        </authorList>
    </citation>
    <scope>PROTEIN SEQUENCE</scope>
    <source>
        <tissue>Stomach</tissue>
    </source>
</reference>
<reference key="2">
    <citation type="journal article" date="1990" name="J. Mol. Evol.">
        <authorList>
            <person name="Jolles J."/>
            <person name="Prager E.M."/>
            <person name="Alnemri E.S."/>
            <person name="Jolles P."/>
            <person name="Ibrahimi I.M."/>
            <person name="Wilson A.C."/>
        </authorList>
    </citation>
    <scope>ERRATUM OF PUBMED:2111849</scope>
</reference>
<evidence type="ECO:0000250" key="1"/>
<evidence type="ECO:0000255" key="2">
    <source>
        <dbReference type="PROSITE-ProRule" id="PRU00680"/>
    </source>
</evidence>
<comment type="function">
    <text>Lysozymes have primarily a bacteriolytic function; those in tissues and body fluids are associated with the monocyte-macrophage system and enhance the activity of immunoagents.</text>
</comment>
<comment type="catalytic activity">
    <reaction>
        <text>Hydrolysis of (1-&gt;4)-beta-linkages between N-acetylmuramic acid and N-acetyl-D-glucosamine residues in a peptidoglycan and between N-acetyl-D-glucosamine residues in chitodextrins.</text>
        <dbReference type="EC" id="3.2.1.17"/>
    </reaction>
</comment>
<comment type="subunit">
    <text evidence="1">Monomer.</text>
</comment>
<comment type="miscellaneous">
    <text>Lysozyme C is capable of both hydrolysis and transglycosylation; it also shows a slight esterase activity. It acts rapidly on both peptide-substituted and unsubstituted peptidoglycan, and slowly on chitin oligosaccharides.</text>
</comment>
<comment type="similarity">
    <text evidence="2">Belongs to the glycosyl hydrolase 22 family.</text>
</comment>
<accession>P37714</accession>
<keyword id="KW-0929">Antimicrobial</keyword>
<keyword id="KW-0081">Bacteriolytic enzyme</keyword>
<keyword id="KW-0222">Digestion</keyword>
<keyword id="KW-0903">Direct protein sequencing</keyword>
<keyword id="KW-1015">Disulfide bond</keyword>
<keyword id="KW-0326">Glycosidase</keyword>
<keyword id="KW-0378">Hydrolase</keyword>
<keyword id="KW-1185">Reference proteome</keyword>
<sequence>KVFERCELARTLKELGLDGYKGVSLANWLCLTKWESSYNTKATNYNPGSESTDYGIFQINSKFWCNDGKTPNAVDGCHVSCSELMENNIAKAVACAKQIVSEQGITAWVAWKSHCRDHDVSSYVEGCTL</sequence>
<proteinExistence type="evidence at protein level"/>